<evidence type="ECO:0000250" key="1"/>
<evidence type="ECO:0000255" key="2"/>
<evidence type="ECO:0000305" key="3"/>
<feature type="chain" id="PRO_0000183235" description="Probable UDP-arabinose 4-epimerase 3">
    <location>
        <begin position="1"/>
        <end position="406"/>
    </location>
</feature>
<feature type="topological domain" description="Cytoplasmic" evidence="2">
    <location>
        <begin position="1"/>
        <end position="26"/>
    </location>
</feature>
<feature type="transmembrane region" description="Helical; Signal-anchor for type II membrane protein" evidence="2">
    <location>
        <begin position="27"/>
        <end position="44"/>
    </location>
</feature>
<feature type="topological domain" description="Lumenal" evidence="2">
    <location>
        <begin position="45"/>
        <end position="406"/>
    </location>
</feature>
<feature type="active site" description="Proton acceptor" evidence="1">
    <location>
        <position position="213"/>
    </location>
</feature>
<feature type="binding site" evidence="1">
    <location>
        <begin position="65"/>
        <end position="96"/>
    </location>
    <ligand>
        <name>NAD(+)</name>
        <dbReference type="ChEBI" id="CHEBI:57540"/>
    </ligand>
</feature>
<protein>
    <recommendedName>
        <fullName>Probable UDP-arabinose 4-epimerase 3</fullName>
        <ecNumber>5.1.3.5</ecNumber>
    </recommendedName>
    <alternativeName>
        <fullName>OsUEL-3</fullName>
    </alternativeName>
    <alternativeName>
        <fullName>UDP-D-xylose 4-epimerase 3</fullName>
    </alternativeName>
    <alternativeName>
        <fullName>UDP-galactose 4-epimerase-like protein 3</fullName>
    </alternativeName>
</protein>
<proteinExistence type="evidence at transcript level"/>
<dbReference type="EC" id="5.1.3.5"/>
<dbReference type="EMBL" id="AP004591">
    <property type="protein sequence ID" value="BAD09640.1"/>
    <property type="status" value="ALT_SEQ"/>
    <property type="molecule type" value="Genomic_DNA"/>
</dbReference>
<dbReference type="EMBL" id="AP008214">
    <property type="protein sequence ID" value="BAF22831.1"/>
    <property type="molecule type" value="Genomic_DNA"/>
</dbReference>
<dbReference type="EMBL" id="AP014964">
    <property type="protein sequence ID" value="BAT03688.1"/>
    <property type="molecule type" value="Genomic_DNA"/>
</dbReference>
<dbReference type="EMBL" id="AK065715">
    <property type="protein sequence ID" value="BAG89638.1"/>
    <property type="molecule type" value="mRNA"/>
</dbReference>
<dbReference type="EMBL" id="AB099292">
    <property type="protein sequence ID" value="BAC53786.1"/>
    <property type="molecule type" value="mRNA"/>
</dbReference>
<dbReference type="RefSeq" id="XP_015649744.1">
    <property type="nucleotide sequence ID" value="XM_015794258.1"/>
</dbReference>
<dbReference type="SMR" id="Q8H0B2"/>
<dbReference type="FunCoup" id="Q8H0B2">
    <property type="interactions" value="133"/>
</dbReference>
<dbReference type="STRING" id="39947.Q8H0B2"/>
<dbReference type="PaxDb" id="39947-Q8H0B2"/>
<dbReference type="EnsemblPlants" id="Os08t0129700-01">
    <property type="protein sequence ID" value="Os08t0129700-01"/>
    <property type="gene ID" value="Os08g0129700"/>
</dbReference>
<dbReference type="EnsemblPlants" id="Os08t0129700-02">
    <property type="protein sequence ID" value="Os08t0129700-02"/>
    <property type="gene ID" value="Os08g0129700"/>
</dbReference>
<dbReference type="Gramene" id="Os08t0129700-01">
    <property type="protein sequence ID" value="Os08t0129700-01"/>
    <property type="gene ID" value="Os08g0129700"/>
</dbReference>
<dbReference type="Gramene" id="Os08t0129700-02">
    <property type="protein sequence ID" value="Os08t0129700-02"/>
    <property type="gene ID" value="Os08g0129700"/>
</dbReference>
<dbReference type="KEGG" id="dosa:Os08g0129700"/>
<dbReference type="eggNOG" id="KOG1371">
    <property type="taxonomic scope" value="Eukaryota"/>
</dbReference>
<dbReference type="HOGENOM" id="CLU_007383_1_10_1"/>
<dbReference type="InParanoid" id="Q8H0B2"/>
<dbReference type="OMA" id="WKESHPA"/>
<dbReference type="OrthoDB" id="9402762at2759"/>
<dbReference type="PlantReactome" id="R-OSA-1119428">
    <property type="pathway name" value="GDP-D-rhamnose biosynthesis"/>
</dbReference>
<dbReference type="PlantReactome" id="R-OSA-1119574">
    <property type="pathway name" value="UDP-L-arabinose biosynthesis and transport"/>
</dbReference>
<dbReference type="PlantReactome" id="R-OSA-1119620">
    <property type="pathway name" value="GDP-L-fucose biosynthesis I (from GDP-D-mannose)"/>
</dbReference>
<dbReference type="UniPathway" id="UPA00797">
    <property type="reaction ID" value="UER00772"/>
</dbReference>
<dbReference type="UniPathway" id="UPA00963"/>
<dbReference type="Proteomes" id="UP000000763">
    <property type="component" value="Chromosome 8"/>
</dbReference>
<dbReference type="Proteomes" id="UP000059680">
    <property type="component" value="Chromosome 8"/>
</dbReference>
<dbReference type="GO" id="GO:0032580">
    <property type="term" value="C:Golgi cisterna membrane"/>
    <property type="evidence" value="ECO:0007669"/>
    <property type="project" value="UniProtKB-SubCell"/>
</dbReference>
<dbReference type="GO" id="GO:0050373">
    <property type="term" value="F:UDP-arabinose 4-epimerase activity"/>
    <property type="evidence" value="ECO:0007669"/>
    <property type="project" value="UniProtKB-EC"/>
</dbReference>
<dbReference type="GO" id="GO:0003978">
    <property type="term" value="F:UDP-glucose 4-epimerase activity"/>
    <property type="evidence" value="ECO:0007669"/>
    <property type="project" value="InterPro"/>
</dbReference>
<dbReference type="GO" id="GO:0045227">
    <property type="term" value="P:capsule polysaccharide biosynthetic process"/>
    <property type="evidence" value="ECO:0007669"/>
    <property type="project" value="UniProtKB-UniPathway"/>
</dbReference>
<dbReference type="GO" id="GO:0006012">
    <property type="term" value="P:galactose metabolic process"/>
    <property type="evidence" value="ECO:0007669"/>
    <property type="project" value="InterPro"/>
</dbReference>
<dbReference type="GO" id="GO:0033358">
    <property type="term" value="P:UDP-L-arabinose biosynthetic process"/>
    <property type="evidence" value="ECO:0007669"/>
    <property type="project" value="UniProtKB-UniPathway"/>
</dbReference>
<dbReference type="CDD" id="cd05247">
    <property type="entry name" value="UDP_G4E_1_SDR_e"/>
    <property type="match status" value="1"/>
</dbReference>
<dbReference type="Gene3D" id="3.40.50.720">
    <property type="entry name" value="NAD(P)-binding Rossmann-like Domain"/>
    <property type="match status" value="1"/>
</dbReference>
<dbReference type="Gene3D" id="3.90.25.10">
    <property type="entry name" value="UDP-galactose 4-epimerase, domain 1"/>
    <property type="match status" value="1"/>
</dbReference>
<dbReference type="InterPro" id="IPR016040">
    <property type="entry name" value="NAD(P)-bd_dom"/>
</dbReference>
<dbReference type="InterPro" id="IPR036291">
    <property type="entry name" value="NAD(P)-bd_dom_sf"/>
</dbReference>
<dbReference type="InterPro" id="IPR005886">
    <property type="entry name" value="UDP_G4E"/>
</dbReference>
<dbReference type="NCBIfam" id="TIGR01179">
    <property type="entry name" value="galE"/>
    <property type="match status" value="1"/>
</dbReference>
<dbReference type="PANTHER" id="PTHR43725:SF38">
    <property type="entry name" value="UDP-ARABINOSE 4-EPIMERASE 3-RELATED"/>
    <property type="match status" value="1"/>
</dbReference>
<dbReference type="PANTHER" id="PTHR43725">
    <property type="entry name" value="UDP-GLUCOSE 4-EPIMERASE"/>
    <property type="match status" value="1"/>
</dbReference>
<dbReference type="Pfam" id="PF16363">
    <property type="entry name" value="GDP_Man_Dehyd"/>
    <property type="match status" value="1"/>
</dbReference>
<dbReference type="SUPFAM" id="SSF51735">
    <property type="entry name" value="NAD(P)-binding Rossmann-fold domains"/>
    <property type="match status" value="1"/>
</dbReference>
<keyword id="KW-0119">Carbohydrate metabolism</keyword>
<keyword id="KW-0333">Golgi apparatus</keyword>
<keyword id="KW-0413">Isomerase</keyword>
<keyword id="KW-0472">Membrane</keyword>
<keyword id="KW-0520">NAD</keyword>
<keyword id="KW-1185">Reference proteome</keyword>
<keyword id="KW-0735">Signal-anchor</keyword>
<keyword id="KW-0812">Transmembrane</keyword>
<keyword id="KW-1133">Transmembrane helix</keyword>
<comment type="catalytic activity">
    <reaction>
        <text>UDP-beta-L-arabinopyranose = UDP-alpha-D-xylose</text>
        <dbReference type="Rhea" id="RHEA:11320"/>
        <dbReference type="ChEBI" id="CHEBI:57632"/>
        <dbReference type="ChEBI" id="CHEBI:61457"/>
        <dbReference type="EC" id="5.1.3.5"/>
    </reaction>
</comment>
<comment type="cofactor">
    <cofactor evidence="1">
        <name>NAD(+)</name>
        <dbReference type="ChEBI" id="CHEBI:57540"/>
    </cofactor>
</comment>
<comment type="pathway">
    <text>Nucleotide-sugar biosynthesis; UDP-L-arabinose biosynthesis; UDP-L-arabinose from UDP-alpha-D-xylose: step 1/1.</text>
</comment>
<comment type="pathway">
    <text>Cell wall biogenesis; cell wall polysaccharide biosynthesis.</text>
</comment>
<comment type="subcellular location">
    <subcellularLocation>
        <location evidence="3">Golgi apparatus</location>
        <location evidence="3">Golgi stack membrane</location>
        <topology evidence="3">Single-pass type II membrane protein</topology>
    </subcellularLocation>
</comment>
<comment type="similarity">
    <text evidence="3">Belongs to the NAD(P)-dependent epimerase/dehydratase family.</text>
</comment>
<comment type="sequence caution" evidence="3">
    <conflict type="erroneous gene model prediction">
        <sequence resource="EMBL-CDS" id="BAD09640"/>
    </conflict>
</comment>
<organism>
    <name type="scientific">Oryza sativa subsp. japonica</name>
    <name type="common">Rice</name>
    <dbReference type="NCBI Taxonomy" id="39947"/>
    <lineage>
        <taxon>Eukaryota</taxon>
        <taxon>Viridiplantae</taxon>
        <taxon>Streptophyta</taxon>
        <taxon>Embryophyta</taxon>
        <taxon>Tracheophyta</taxon>
        <taxon>Spermatophyta</taxon>
        <taxon>Magnoliopsida</taxon>
        <taxon>Liliopsida</taxon>
        <taxon>Poales</taxon>
        <taxon>Poaceae</taxon>
        <taxon>BOP clade</taxon>
        <taxon>Oryzoideae</taxon>
        <taxon>Oryzeae</taxon>
        <taxon>Oryzinae</taxon>
        <taxon>Oryza</taxon>
        <taxon>Oryza sativa</taxon>
    </lineage>
</organism>
<sequence length="406" mass="44827">MIPLNRRASQTRGGMEYFDARRKPHNVGKVIAALVLTTLCIFILKQSPGFGGSSVFSRHEPGVTHVLVTGGAGYIGSHASLRLLKDNYRVTIVDNLSRGNMGAVKVLQELFPQPGRLQFIYADLGDQKTVNKIFAENAFDAVMHFAAVAYVGESTLEPLRYYHNITSNTLLILEAMASHGVKTLIYSSTCATYGEPEKMPIVETTRQLPINPYGKAKKMAEDIILDFTKGRKDMAVMILRYFNVIGSDPEGRLGEAPRPELREHGRISGACFDAALGIIPGLKVKGTDYPTTDGTCIRDYIDVTDLVDAHVKALNKAEPSKVGIYNVGTGRGRSVKEFVDACKKATGVNIKIEYLSRRPGDYAEVYSDPTKINTELNWTAQYTDLKESLSVAWRWQKSHPRGYGSN</sequence>
<accession>Q8H0B2</accession>
<accession>Q0J884</accession>
<accession>Q7EZR9</accession>
<reference key="1">
    <citation type="journal article" date="2005" name="Nature">
        <title>The map-based sequence of the rice genome.</title>
        <authorList>
            <consortium name="International rice genome sequencing project (IRGSP)"/>
        </authorList>
    </citation>
    <scope>NUCLEOTIDE SEQUENCE [LARGE SCALE GENOMIC DNA]</scope>
    <source>
        <strain>cv. Nipponbare</strain>
    </source>
</reference>
<reference key="2">
    <citation type="journal article" date="2008" name="Nucleic Acids Res.">
        <title>The rice annotation project database (RAP-DB): 2008 update.</title>
        <authorList>
            <consortium name="The rice annotation project (RAP)"/>
        </authorList>
    </citation>
    <scope>GENOME REANNOTATION</scope>
    <source>
        <strain>cv. Nipponbare</strain>
    </source>
</reference>
<reference key="3">
    <citation type="journal article" date="2013" name="Rice">
        <title>Improvement of the Oryza sativa Nipponbare reference genome using next generation sequence and optical map data.</title>
        <authorList>
            <person name="Kawahara Y."/>
            <person name="de la Bastide M."/>
            <person name="Hamilton J.P."/>
            <person name="Kanamori H."/>
            <person name="McCombie W.R."/>
            <person name="Ouyang S."/>
            <person name="Schwartz D.C."/>
            <person name="Tanaka T."/>
            <person name="Wu J."/>
            <person name="Zhou S."/>
            <person name="Childs K.L."/>
            <person name="Davidson R.M."/>
            <person name="Lin H."/>
            <person name="Quesada-Ocampo L."/>
            <person name="Vaillancourt B."/>
            <person name="Sakai H."/>
            <person name="Lee S.S."/>
            <person name="Kim J."/>
            <person name="Numa H."/>
            <person name="Itoh T."/>
            <person name="Buell C.R."/>
            <person name="Matsumoto T."/>
        </authorList>
    </citation>
    <scope>GENOME REANNOTATION</scope>
    <source>
        <strain>cv. Nipponbare</strain>
    </source>
</reference>
<reference key="4">
    <citation type="journal article" date="2003" name="Science">
        <title>Collection, mapping, and annotation of over 28,000 cDNA clones from japonica rice.</title>
        <authorList>
            <consortium name="The rice full-length cDNA consortium"/>
        </authorList>
    </citation>
    <scope>NUCLEOTIDE SEQUENCE [LARGE SCALE MRNA]</scope>
    <source>
        <strain>cv. Nipponbare</strain>
    </source>
</reference>
<reference key="5">
    <citation type="submission" date="2002-12" db="EMBL/GenBank/DDBJ databases">
        <title>Cloning of UDP-glucose 4-epimerase-like genes in Oryza sativa.</title>
        <authorList>
            <person name="Suzuki K."/>
            <person name="Kitamura S."/>
        </authorList>
    </citation>
    <scope>NUCLEOTIDE SEQUENCE [MRNA]</scope>
    <source>
        <strain>cv. Nipponbare</strain>
        <tissue>Seed</tissue>
    </source>
</reference>
<gene>
    <name type="primary">UEL-3</name>
    <name type="ordered locus">Os08g0129700</name>
    <name type="ordered locus">LOC_Os08g03570</name>
    <name type="ORF">P0582D05.120</name>
</gene>
<name>ARAE3_ORYSJ</name>